<accession>Q8J0L6</accession>
<organism>
    <name type="scientific">Claviceps purpurea</name>
    <name type="common">Ergot fungus</name>
    <name type="synonym">Sphacelia segetum</name>
    <dbReference type="NCBI Taxonomy" id="5111"/>
    <lineage>
        <taxon>Eukaryota</taxon>
        <taxon>Fungi</taxon>
        <taxon>Dikarya</taxon>
        <taxon>Ascomycota</taxon>
        <taxon>Pezizomycotina</taxon>
        <taxon>Sordariomycetes</taxon>
        <taxon>Hypocreomycetidae</taxon>
        <taxon>Hypocreales</taxon>
        <taxon>Clavicipitaceae</taxon>
        <taxon>Claviceps</taxon>
    </lineage>
</organism>
<comment type="function">
    <text evidence="1 4 5 6 7 8 9 10 11 12 13 14 15 20 21">D-lysergyl-peptide-synthetase subunit 2; part of the gene cluster that mediates the biosynthesis of fungal ergot alkaloid (PubMed:10071219, PubMed:14700635, PubMed:14732265, PubMed:15904941, PubMed:17308187, PubMed:17720822). DmaW catalyzes the first step of ergot alkaloid biosynthesis by condensing dimethylallyl diphosphate (DMAP) and tryptophan to form 4-dimethylallyl-L-tryptophan (PubMed:14732265). The second step is catalyzed by the methyltransferase easF that methylates 4-dimethylallyl-L-tryptophan in the presence of S-adenosyl-L-methionine, resulting in the formation of 4-dimethylallyl-L-abrine (By similarity). The catalase easC and the FAD-dependent oxidoreductase easE then transform 4-dimethylallyl-L-abrine to chanoclavine-I which is further oxidized by EasD in the presence of NAD(+), resulting in the formation of chanoclavine-I aldehyde (PubMed:20118373, PubMed:21409592). Agroclavine dehydrogenase easG then mediates the conversion of chanoclavine-I aldehyde to agroclavine via a non-enzymatic adduct reaction: the substrate is an iminium intermediate that is formed spontaneously from chanoclavine-I aldehyde in the presence of glutathione (PubMed:20735127, PubMed:21494745). The presence of easA is not required to complete this reaction (PubMed:21494745). Further conversion of agroclavine to paspalic acid is a two-step process involving oxidation of agroclavine to elymoclavine and of elymoclavine to paspalic acid, the second step being performed by the elymoclavine oxidase cloA (PubMed:16538694, PubMed:17720822). Paspalic acid is then further converted to D-lysergic acid (PubMed:15904941). Ergopeptines are assembled from D-lysergic acid and three different amino acids by the D-lysergyl-peptide-synthetases composed each of a monomudular and a trimodular nonribosomal peptide synthetase subunit (PubMed:14700635, PubMed:15904941). LpsB and lpsC encode the monomodular subunits responsible for D-lysergic acid activation and incorporation into the ergopeptine backbone (PubMed:14700635). LpsA1 and A2 subunits encode the trimodular nonribosomal peptide synthetase assembling the tripeptide portion of ergopeptines (PubMed:14700635). LpsA1 is responsible for formation of the major ergopeptine, ergotamine, and lpsA2 for alpha-ergocryptine, the minor ergopeptine of the total alkaloid mixture elaborated by C.purpurea (PubMed:17560817, PubMed:19139103). D-lysergyl-tripeptides are assembled by the nonribosomal peptide synthetases and released as N-(D-lysergyl-aminoacyl)-lactams (PubMed:24361048). Cyclolization of the D-lysergyl-tripeptides is performed by the Fe(2+)/2-ketoglutarate-dependent dioxygenase easH which introduces a hydroxyl group into N-(D-lysergyl-aminoacyl)-lactam at alpha-C of the aminoacyl residue followed by spontaneous condensation with the terminal lactam carbonyl group (PubMed:24361048).</text>
</comment>
<comment type="pathway">
    <text evidence="10">Alkaloid biosynthesis; ergot alkaloid biosynthesis.</text>
</comment>
<comment type="domain">
    <text evidence="5">NRP synthetases are composed of discrete domains (adenylation (A), thiolation (T) or peptidyl carrier protein (PCP) and condensation (C) domains) which when grouped together are referred to as a single module (PubMed:14700635). Each module is responsible for the recognition (via the A domain) and incorporation of a single amino acid into the growing peptide product (PubMed:14700635). Thus, an NRP synthetase is generally composed of one or more modules and can terminate in a thioesterase domain (TE) or reductase domain (R) that releases the newly synthesized peptide from the enzyme (PubMed:14700635). LpsB is composed of only one module which is required for the activation of D-lysergic acid activation and its incorporation in the final ergot alkaloid (PubMed:19139103).</text>
</comment>
<comment type="similarity">
    <text evidence="19">Belongs to the NRP synthetase family.</text>
</comment>
<dbReference type="EC" id="2.3.1.-" evidence="10"/>
<dbReference type="EMBL" id="AJ439610">
    <property type="protein sequence ID" value="CAD28788.1"/>
    <property type="molecule type" value="Genomic_DNA"/>
</dbReference>
<dbReference type="SMR" id="Q8J0L6"/>
<dbReference type="VEuPathDB" id="FungiDB:CPUR_04083"/>
<dbReference type="BioCyc" id="MetaCyc:MONOMER-17448"/>
<dbReference type="UniPathway" id="UPA00327"/>
<dbReference type="GO" id="GO:0005737">
    <property type="term" value="C:cytoplasm"/>
    <property type="evidence" value="ECO:0007669"/>
    <property type="project" value="TreeGrafter"/>
</dbReference>
<dbReference type="GO" id="GO:0016874">
    <property type="term" value="F:ligase activity"/>
    <property type="evidence" value="ECO:0007669"/>
    <property type="project" value="UniProtKB-KW"/>
</dbReference>
<dbReference type="GO" id="GO:0031177">
    <property type="term" value="F:phosphopantetheine binding"/>
    <property type="evidence" value="ECO:0007669"/>
    <property type="project" value="InterPro"/>
</dbReference>
<dbReference type="GO" id="GO:0016740">
    <property type="term" value="F:transferase activity"/>
    <property type="evidence" value="ECO:0007669"/>
    <property type="project" value="UniProtKB-KW"/>
</dbReference>
<dbReference type="GO" id="GO:0043041">
    <property type="term" value="P:amino acid activation for nonribosomal peptide biosynthetic process"/>
    <property type="evidence" value="ECO:0007669"/>
    <property type="project" value="TreeGrafter"/>
</dbReference>
<dbReference type="GO" id="GO:0035835">
    <property type="term" value="P:indole alkaloid biosynthetic process"/>
    <property type="evidence" value="ECO:0007669"/>
    <property type="project" value="UniProtKB-UniPathway"/>
</dbReference>
<dbReference type="CDD" id="cd05918">
    <property type="entry name" value="A_NRPS_SidN3_like"/>
    <property type="match status" value="1"/>
</dbReference>
<dbReference type="CDD" id="cd19545">
    <property type="entry name" value="FUM14_C_NRPS-like"/>
    <property type="match status" value="1"/>
</dbReference>
<dbReference type="FunFam" id="3.30.300.30:FF:000015">
    <property type="entry name" value="Nonribosomal peptide synthase SidD"/>
    <property type="match status" value="1"/>
</dbReference>
<dbReference type="FunFam" id="1.10.1200.10:FF:000005">
    <property type="entry name" value="Nonribosomal peptide synthetase 1"/>
    <property type="match status" value="1"/>
</dbReference>
<dbReference type="Gene3D" id="3.30.300.30">
    <property type="match status" value="1"/>
</dbReference>
<dbReference type="Gene3D" id="3.40.50.980">
    <property type="match status" value="2"/>
</dbReference>
<dbReference type="Gene3D" id="1.10.1200.10">
    <property type="entry name" value="ACP-like"/>
    <property type="match status" value="1"/>
</dbReference>
<dbReference type="Gene3D" id="3.30.559.10">
    <property type="entry name" value="Chloramphenicol acetyltransferase-like domain"/>
    <property type="match status" value="1"/>
</dbReference>
<dbReference type="Gene3D" id="2.30.38.10">
    <property type="entry name" value="Luciferase, Domain 3"/>
    <property type="match status" value="1"/>
</dbReference>
<dbReference type="Gene3D" id="3.30.559.30">
    <property type="entry name" value="Nonribosomal peptide synthetase, condensation domain"/>
    <property type="match status" value="2"/>
</dbReference>
<dbReference type="InterPro" id="IPR010071">
    <property type="entry name" value="AA_adenyl_dom"/>
</dbReference>
<dbReference type="InterPro" id="IPR036736">
    <property type="entry name" value="ACP-like_sf"/>
</dbReference>
<dbReference type="InterPro" id="IPR045851">
    <property type="entry name" value="AMP-bd_C_sf"/>
</dbReference>
<dbReference type="InterPro" id="IPR000873">
    <property type="entry name" value="AMP-dep_synth/lig_dom"/>
</dbReference>
<dbReference type="InterPro" id="IPR023213">
    <property type="entry name" value="CAT-like_dom_sf"/>
</dbReference>
<dbReference type="InterPro" id="IPR001242">
    <property type="entry name" value="Condensatn"/>
</dbReference>
<dbReference type="InterPro" id="IPR020806">
    <property type="entry name" value="PKS_PP-bd"/>
</dbReference>
<dbReference type="InterPro" id="IPR009081">
    <property type="entry name" value="PP-bd_ACP"/>
</dbReference>
<dbReference type="InterPro" id="IPR006162">
    <property type="entry name" value="Ppantetheine_attach_site"/>
</dbReference>
<dbReference type="NCBIfam" id="TIGR01733">
    <property type="entry name" value="AA-adenyl-dom"/>
    <property type="match status" value="1"/>
</dbReference>
<dbReference type="PANTHER" id="PTHR45527">
    <property type="entry name" value="NONRIBOSOMAL PEPTIDE SYNTHETASE"/>
    <property type="match status" value="1"/>
</dbReference>
<dbReference type="PANTHER" id="PTHR45527:SF3">
    <property type="entry name" value="SIDEROPHORE SYNTHETASE (EUROFUNG)"/>
    <property type="match status" value="1"/>
</dbReference>
<dbReference type="Pfam" id="PF00501">
    <property type="entry name" value="AMP-binding"/>
    <property type="match status" value="1"/>
</dbReference>
<dbReference type="Pfam" id="PF00668">
    <property type="entry name" value="Condensation"/>
    <property type="match status" value="1"/>
</dbReference>
<dbReference type="Pfam" id="PF00550">
    <property type="entry name" value="PP-binding"/>
    <property type="match status" value="1"/>
</dbReference>
<dbReference type="SMART" id="SM00823">
    <property type="entry name" value="PKS_PP"/>
    <property type="match status" value="1"/>
</dbReference>
<dbReference type="SUPFAM" id="SSF56801">
    <property type="entry name" value="Acetyl-CoA synthetase-like"/>
    <property type="match status" value="1"/>
</dbReference>
<dbReference type="SUPFAM" id="SSF47336">
    <property type="entry name" value="ACP-like"/>
    <property type="match status" value="1"/>
</dbReference>
<dbReference type="SUPFAM" id="SSF52777">
    <property type="entry name" value="CoA-dependent acyltransferases"/>
    <property type="match status" value="3"/>
</dbReference>
<dbReference type="PROSITE" id="PS50075">
    <property type="entry name" value="CARRIER"/>
    <property type="match status" value="1"/>
</dbReference>
<dbReference type="PROSITE" id="PS00012">
    <property type="entry name" value="PHOSPHOPANTETHEINE"/>
    <property type="match status" value="1"/>
</dbReference>
<name>LPSB_CLAPU</name>
<evidence type="ECO:0000250" key="1">
    <source>
        <dbReference type="UniProtKB" id="Q50EL0"/>
    </source>
</evidence>
<evidence type="ECO:0000255" key="2"/>
<evidence type="ECO:0000255" key="3">
    <source>
        <dbReference type="PROSITE-ProRule" id="PRU00258"/>
    </source>
</evidence>
<evidence type="ECO:0000269" key="4">
    <source>
    </source>
</evidence>
<evidence type="ECO:0000269" key="5">
    <source>
    </source>
</evidence>
<evidence type="ECO:0000269" key="6">
    <source>
    </source>
</evidence>
<evidence type="ECO:0000269" key="7">
    <source>
    </source>
</evidence>
<evidence type="ECO:0000269" key="8">
    <source>
    </source>
</evidence>
<evidence type="ECO:0000269" key="9">
    <source>
    </source>
</evidence>
<evidence type="ECO:0000269" key="10">
    <source>
    </source>
</evidence>
<evidence type="ECO:0000269" key="11">
    <source>
    </source>
</evidence>
<evidence type="ECO:0000269" key="12">
    <source>
    </source>
</evidence>
<evidence type="ECO:0000269" key="13">
    <source>
    </source>
</evidence>
<evidence type="ECO:0000269" key="14">
    <source>
    </source>
</evidence>
<evidence type="ECO:0000269" key="15">
    <source>
    </source>
</evidence>
<evidence type="ECO:0000303" key="16">
    <source>
    </source>
</evidence>
<evidence type="ECO:0000303" key="17">
    <source>
    </source>
</evidence>
<evidence type="ECO:0000303" key="18">
    <source>
    </source>
</evidence>
<evidence type="ECO:0000305" key="19"/>
<evidence type="ECO:0000305" key="20">
    <source>
    </source>
</evidence>
<evidence type="ECO:0000305" key="21">
    <source>
    </source>
</evidence>
<proteinExistence type="evidence at protein level"/>
<sequence length="1308" mass="143850">MATPEKWRKYLEDYIPCSFPTFLDNEGADSKSFASVLVRLEHPYGRLMSFSNNCGVDVAVVLNVAWGIVLQAYTGQDATCFAVIAESNLNIRPCRIRFTSDKVVSDILSACQSPCSEKTGDHDIPASHLSQDGGFLASEFFNTCIWGPMQGSQMTSETQAADMNRNALNLFDLVTRVEVPRVEVDKSITRITLTYKRGLMREHQALAVAKAMERAISEIISGKERLDQFCLLTSEDRRQMSLWNMNLSDNSDARIETLIHEWCRRTPSAVAVCGWDGDFSYKELNELSTGVKHDLRHLGIGPEVFVPILFEKSRWAVIAMLGVMKAGGAFILLDPAHPPKRLRSICDKVSARLVVSSVQQADLAAGLAGHVVIVGGEVATAGMAQHVGEHDDSMDCIAAPHNALYAVFTSGSTGTPKGVVNSHSSFLAAMPVYLKALELDNNSRVFQFASYAFDVTIFDALMTLVAGGCVCVLSNADRSSDLTSAIQHFGTTHLSVTPTVARILDPQDFPSLKTIVLGGELSASDELLKWVNNVRVIRLYGASECTVMSIQCTSGPASSIKTINYETGNCCWVVNPQNHEQLRPLGAVGELLVEGAVVGRGYLDDASQTSETFIEAPAWLQELRQGSSTVYKSGDLVRIAADKSVQFVCRKSTQVKLRGQRIELGEVEHHVRLAIPSATECVVELITIPDASRPPMLMAFVLSDTDASTSSITARRNATSDAVFAEPSASFRSQIASITSKLRDALPSYMVPSVILPLRIMPLTGTDKINRKLLRQLAAALSREDLQLYQAQQTTYRAPSNDIEEAFQRFFAQALGLSLDQIGADDHFFSLGGDSLTAMRLAAMARKAKFDLTVQNVFDHPELSELARHTKLVADESQEFPQPFTLIAGSKQGIVRDAARQCRLPSRVIEDVYPCTPLQKGLLAETMRDAAAFVAKIEVPLPRDVDLDRLRQAWAAVAKANPILRTRMIFSPSYGMLQVVVREDVPWIESDEVESQELVVVGRSLVQLILRRRPSTALFLHIHHAVYDGYSLPLMFAQLNNAYHGETLAFRPASAFIRYLATMPDATDYWQSMCQGLESPSFPALPHPSHRPHPDSKATHTVCVASPHAREYTPNTHVRLAWAITQAHEQGLLDVFYGTVVSGRNAPVDQIESMLIPTVATVPCRITLDVDSPVRKILHRIQDVATRGIPFEQIGLAEISHLGKDAAHACSFQTLLLMQPTAVEQNENDFFNTSTSDANYRADATYAINLFCTLENQDLSVTALYDGNIVSTDTMQRLLQNLGKSMQEIHAAPRTLIGDILKSLHSRL</sequence>
<feature type="chain" id="PRO_0000439110" description="D-lysergyl-peptide-synthetase subunit 2">
    <location>
        <begin position="1"/>
        <end position="1308"/>
    </location>
</feature>
<feature type="domain" description="Carrier" evidence="3">
    <location>
        <begin position="803"/>
        <end position="871"/>
    </location>
</feature>
<feature type="region of interest" description="Adenylation (A) domain" evidence="2">
    <location>
        <begin position="261"/>
        <end position="658"/>
    </location>
</feature>
<feature type="region of interest" description="Condensation (C) domain" evidence="2">
    <location>
        <begin position="910"/>
        <end position="1299"/>
    </location>
</feature>
<feature type="modified residue" description="O-(pantetheine 4'-phosphoryl)serine" evidence="3">
    <location>
        <position position="835"/>
    </location>
</feature>
<gene>
    <name evidence="18" type="primary">lpsB</name>
    <name evidence="17" type="synonym">cpps2</name>
</gene>
<keyword id="KW-0436">Ligase</keyword>
<keyword id="KW-0596">Phosphopantetheine</keyword>
<keyword id="KW-0597">Phosphoprotein</keyword>
<keyword id="KW-0808">Transferase</keyword>
<protein>
    <recommendedName>
        <fullName evidence="16">D-lysergyl-peptide-synthetase subunit 2</fullName>
        <shortName evidence="16">LPS2</shortName>
        <ecNumber evidence="10">2.3.1.-</ecNumber>
    </recommendedName>
    <alternativeName>
        <fullName evidence="17">Ergot alkaloid synthesis protein ps2</fullName>
    </alternativeName>
    <alternativeName>
        <fullName evidence="17">Nonribosomal peptide synthetase 2</fullName>
    </alternativeName>
</protein>
<reference key="1">
    <citation type="journal article" date="2003" name="Chem. Biol.">
        <title>Molecular cloning and analysis of the ergopeptine assembly system in the ergot fungus Claviceps purpurea.</title>
        <authorList>
            <person name="Correia T."/>
            <person name="Grammel N."/>
            <person name="Ortel I."/>
            <person name="Keller U."/>
            <person name="Tudzynski P."/>
        </authorList>
    </citation>
    <scope>NUCLEOTIDE SEQUENCE [GENOMIC DNA]</scope>
    <scope>FUNCTION</scope>
    <scope>DOMAIN</scope>
    <source>
        <strain>P1 / 1029/N5</strain>
    </source>
</reference>
<reference key="2">
    <citation type="journal article" date="1999" name="Mol. Gen. Genet.">
        <title>Evidence for an ergot alkaloid gene cluster in Claviceps purpurea.</title>
        <authorList>
            <person name="Tudzynski P."/>
            <person name="Hoelter K."/>
            <person name="Correia T.H."/>
            <person name="Arntz C."/>
            <person name="Grammel N."/>
            <person name="Keller U."/>
        </authorList>
    </citation>
    <scope>IDENTIFICATION IN THE EAS CLUSTER</scope>
    <scope>FUNCTION</scope>
    <source>
        <strain>P1 / 1029/N5</strain>
    </source>
</reference>
<reference key="3">
    <citation type="journal article" date="2001" name="Appl. Microbiol. Biotechnol.">
        <title>Biotechnology and genetics of ergot alkaloids.</title>
        <authorList>
            <person name="Tudzynski P."/>
            <person name="Correia T."/>
            <person name="Keller U."/>
        </authorList>
    </citation>
    <scope>BIOTECHNOLOGY</scope>
    <source>
        <strain>P1 / 1029/N5</strain>
    </source>
</reference>
<reference key="4">
    <citation type="journal article" date="2004" name="Fungal Genet. Biol.">
        <title>The determinant step in ergot alkaloid biosynthesis by an endophyte of perennial ryegrass.</title>
        <authorList>
            <person name="Wang J."/>
            <person name="Machado C."/>
            <person name="Panaccione D.G."/>
            <person name="Tsai H.-F."/>
            <person name="Schardl C.L."/>
        </authorList>
    </citation>
    <scope>FUNCTION</scope>
    <source>
        <strain>ATCC 20102 / Farmitalia FI 32/17</strain>
    </source>
</reference>
<reference key="5">
    <citation type="journal article" date="2005" name="Phytochemistry">
        <title>The ergot alkaloid gene cluster in Claviceps purpurea: extension of the cluster sequence and intra species evolution.</title>
        <authorList>
            <person name="Haarmann T."/>
            <person name="Machado C."/>
            <person name="Lubbe Y."/>
            <person name="Correia T."/>
            <person name="Schardl C.L."/>
            <person name="Panaccione D.G."/>
            <person name="Tudzynski P."/>
        </authorList>
    </citation>
    <scope>FUNCTION</scope>
    <scope>IDENTIFICATION IN THE EAS CLUSTER</scope>
</reference>
<reference key="6">
    <citation type="journal article" date="2006" name="ChemBioChem">
        <title>Identification of the cytochrome P450 monooxygenase that bridges the clavine and ergoline alkaloid pathways.</title>
        <authorList>
            <person name="Haarmann T."/>
            <person name="Ortel I."/>
            <person name="Tudzynski P."/>
            <person name="Keller U."/>
        </authorList>
    </citation>
    <scope>FUNCTION</scope>
    <source>
        <strain>P1 / 1029/N5</strain>
    </source>
</reference>
<reference key="7">
    <citation type="journal article" date="2007" name="Appl. Environ. Microbiol.">
        <title>A complex ergovaline gene cluster in epichloe endophytes of grasses.</title>
        <authorList>
            <person name="Fleetwood D.J."/>
            <person name="Scott B."/>
            <person name="Lane G.A."/>
            <person name="Tanaka A."/>
            <person name="Johnson R.D."/>
        </authorList>
    </citation>
    <scope>FUNCTION</scope>
</reference>
<reference key="8">
    <citation type="journal article" date="2007" name="Appl. Environ. Microbiol.">
        <title>Comparison of ergot alkaloid biosynthesis gene clusters in Claviceps species indicates loss of late pathway steps in evolution of C. fusiformis.</title>
        <authorList>
            <person name="Lorenz N."/>
            <person name="Wilson E.V."/>
            <person name="Machado C."/>
            <person name="Schardl C.L."/>
            <person name="Tudzynski P."/>
        </authorList>
    </citation>
    <scope>FUNCTION</scope>
</reference>
<reference key="9">
    <citation type="journal article" date="2008" name="Fungal Genet. Biol.">
        <title>Use of a nonhomologous end joining deficient strain (Deltaku70) of the ergot fungus Claviceps purpurea for identification of a nonribosomal peptide synthetase gene involved in ergotamine biosynthesis.</title>
        <authorList>
            <person name="Haarmann T."/>
            <person name="Lorenz N."/>
            <person name="Tudzynski P."/>
        </authorList>
    </citation>
    <scope>FUNCTION</scope>
</reference>
<reference key="10">
    <citation type="journal article" date="2009" name="J. Biol. Chem.">
        <title>Combinatorial assembly of simple and complex D-lysergic acid alkaloid peptide classes in the ergot fungus Claviceps purpurea.</title>
        <authorList>
            <person name="Ortel I."/>
            <person name="Keller U."/>
        </authorList>
    </citation>
    <scope>FUNCTION</scope>
    <scope>DOMAIN</scope>
    <scope>CATALYTIC ACTIVITY</scope>
    <scope>PATHWAY</scope>
</reference>
<reference key="11">
    <citation type="journal article" date="2010" name="Appl. Environ. Microbiol.">
        <title>Alkaloid cluster gene ccsA of the ergot fungus Claviceps purpurea encodes chanoclavine I synthase, a flavin adenine dinucleotide-containing oxidoreductase mediating the transformation of N-methyl-dimethylallyltryptophan to chanoclavine I.</title>
        <authorList>
            <person name="Lorenz N."/>
            <person name="Olsovska J."/>
            <person name="Sulc M."/>
            <person name="Tudzynski P."/>
        </authorList>
    </citation>
    <scope>FUNCTION</scope>
</reference>
<reference key="12">
    <citation type="journal article" date="2010" name="J. Am. Chem. Soc.">
        <title>Controlling a structural branch point in ergot alkaloid biosynthesis.</title>
        <authorList>
            <person name="Cheng J.Z."/>
            <person name="Coyle C.M."/>
            <person name="Panaccione D.G."/>
            <person name="O'Connor S.E."/>
        </authorList>
    </citation>
    <scope>FUNCTION</scope>
    <source>
        <strain>ATCC 20102 / Farmitalia FI 32/17</strain>
    </source>
</reference>
<reference key="13">
    <citation type="journal article" date="2011" name="Curr. Genet.">
        <title>Ergot cluster-encoded catalase is required for synthesis of chanoclavine-I in Aspergillus fumigatus.</title>
        <authorList>
            <person name="Goetz K.E."/>
            <person name="Coyle C.M."/>
            <person name="Cheng J.Z."/>
            <person name="O'Connor S.E."/>
            <person name="Panaccione D.G."/>
        </authorList>
    </citation>
    <scope>FUNCTION</scope>
</reference>
<reference key="14">
    <citation type="journal article" date="2011" name="Org. Biomol. Chem.">
        <title>New insights into ergot alkaloid biosynthesis in Claviceps purpurea: an agroclavine synthase EasG catalyses, via a non-enzymatic adduct with reduced glutathione, the conversion of chanoclavine-I aldehyde to agroclavine.</title>
        <authorList>
            <person name="Matuschek M."/>
            <person name="Wallwey C."/>
            <person name="Xie X."/>
            <person name="Li S.M."/>
        </authorList>
    </citation>
    <scope>FUNCTION</scope>
</reference>
<reference key="15">
    <citation type="journal article" date="2014" name="Chem. Biol.">
        <title>Cyclolization of D-lysergic acid alkaloid peptides.</title>
        <authorList>
            <person name="Havemann J."/>
            <person name="Vogel D."/>
            <person name="Loll B."/>
            <person name="Keller U."/>
        </authorList>
    </citation>
    <scope>FUNCTION</scope>
</reference>